<proteinExistence type="inferred from homology"/>
<comment type="function">
    <text evidence="1">Secreted aspartic endopeptidase that allows assimilation of proteinaceous substrates. The scissile peptide bond is attacked by a nucleophilic water molecule activated by two aspartic residues in the active site. Shows a broad primary substrate specificity. Favors hydrophobic residues at the P1 and P1' positions.</text>
</comment>
<comment type="subunit">
    <text evidence="1">Monomer.</text>
</comment>
<comment type="subcellular location">
    <subcellularLocation>
        <location evidence="1">Secreted</location>
    </subcellularLocation>
</comment>
<comment type="similarity">
    <text evidence="4">Belongs to the peptidase A1 family.</text>
</comment>
<comment type="sequence caution" evidence="5">
    <conflict type="erroneous initiation">
        <sequence resource="EMBL-CDS" id="CBX99678"/>
    </conflict>
    <text>Extended N-terminus.</text>
</comment>
<accession>E5A7T3</accession>
<name>PEPA_LEPMJ</name>
<evidence type="ECO:0000250" key="1">
    <source>
        <dbReference type="UniProtKB" id="Q12567"/>
    </source>
</evidence>
<evidence type="ECO:0000255" key="2"/>
<evidence type="ECO:0000255" key="3">
    <source>
        <dbReference type="PROSITE-ProRule" id="PRU00498"/>
    </source>
</evidence>
<evidence type="ECO:0000255" key="4">
    <source>
        <dbReference type="PROSITE-ProRule" id="PRU01103"/>
    </source>
</evidence>
<evidence type="ECO:0000305" key="5"/>
<dbReference type="EC" id="3.4.23.-"/>
<dbReference type="EMBL" id="FP929136">
    <property type="protein sequence ID" value="CBX99678.1"/>
    <property type="status" value="ALT_INIT"/>
    <property type="molecule type" value="Genomic_DNA"/>
</dbReference>
<dbReference type="RefSeq" id="XP_003843157.1">
    <property type="nucleotide sequence ID" value="XM_003843109.1"/>
</dbReference>
<dbReference type="SMR" id="E5A7T3"/>
<dbReference type="STRING" id="985895.E5A7T3"/>
<dbReference type="VEuPathDB" id="FungiDB:LEMA_P089170.1"/>
<dbReference type="eggNOG" id="KOG1339">
    <property type="taxonomic scope" value="Eukaryota"/>
</dbReference>
<dbReference type="InParanoid" id="E5A7T3"/>
<dbReference type="OrthoDB" id="2747330at2759"/>
<dbReference type="Proteomes" id="UP000002668">
    <property type="component" value="Genome"/>
</dbReference>
<dbReference type="GO" id="GO:0005576">
    <property type="term" value="C:extracellular region"/>
    <property type="evidence" value="ECO:0007669"/>
    <property type="project" value="UniProtKB-SubCell"/>
</dbReference>
<dbReference type="GO" id="GO:0004190">
    <property type="term" value="F:aspartic-type endopeptidase activity"/>
    <property type="evidence" value="ECO:0007669"/>
    <property type="project" value="UniProtKB-KW"/>
</dbReference>
<dbReference type="GO" id="GO:0006508">
    <property type="term" value="P:proteolysis"/>
    <property type="evidence" value="ECO:0007669"/>
    <property type="project" value="UniProtKB-KW"/>
</dbReference>
<dbReference type="CDD" id="cd06097">
    <property type="entry name" value="Aspergillopepsin_like"/>
    <property type="match status" value="1"/>
</dbReference>
<dbReference type="FunFam" id="2.40.70.10:FF:000024">
    <property type="entry name" value="Endothiapepsin"/>
    <property type="match status" value="1"/>
</dbReference>
<dbReference type="FunFam" id="2.40.70.10:FF:000026">
    <property type="entry name" value="Endothiapepsin"/>
    <property type="match status" value="1"/>
</dbReference>
<dbReference type="Gene3D" id="2.40.70.10">
    <property type="entry name" value="Acid Proteases"/>
    <property type="match status" value="2"/>
</dbReference>
<dbReference type="InterPro" id="IPR001461">
    <property type="entry name" value="Aspartic_peptidase_A1"/>
</dbReference>
<dbReference type="InterPro" id="IPR001969">
    <property type="entry name" value="Aspartic_peptidase_AS"/>
</dbReference>
<dbReference type="InterPro" id="IPR034163">
    <property type="entry name" value="Aspergillopepsin-like_cat_dom"/>
</dbReference>
<dbReference type="InterPro" id="IPR033121">
    <property type="entry name" value="PEPTIDASE_A1"/>
</dbReference>
<dbReference type="InterPro" id="IPR021109">
    <property type="entry name" value="Peptidase_aspartic_dom_sf"/>
</dbReference>
<dbReference type="PANTHER" id="PTHR47966:SF2">
    <property type="entry name" value="ASPERGILLOPEPSIN-1-RELATED"/>
    <property type="match status" value="1"/>
</dbReference>
<dbReference type="PANTHER" id="PTHR47966">
    <property type="entry name" value="BETA-SITE APP-CLEAVING ENZYME, ISOFORM A-RELATED"/>
    <property type="match status" value="1"/>
</dbReference>
<dbReference type="Pfam" id="PF00026">
    <property type="entry name" value="Asp"/>
    <property type="match status" value="1"/>
</dbReference>
<dbReference type="PRINTS" id="PR00792">
    <property type="entry name" value="PEPSIN"/>
</dbReference>
<dbReference type="SUPFAM" id="SSF50630">
    <property type="entry name" value="Acid proteases"/>
    <property type="match status" value="1"/>
</dbReference>
<dbReference type="PROSITE" id="PS00141">
    <property type="entry name" value="ASP_PROTEASE"/>
    <property type="match status" value="2"/>
</dbReference>
<dbReference type="PROSITE" id="PS51767">
    <property type="entry name" value="PEPTIDASE_A1"/>
    <property type="match status" value="1"/>
</dbReference>
<sequence>MPSIVSLTAALTFVGAVIASPVEKRSAFSVEQVPHTTYLKNGPAQKVKTLRKYGKPVPQSLLDAAESRDAVGETFTASAVGDGSDPAVPSDQYDSSYLSPVTVGSTTVELDFDTGSADLWVFSSLQASSQLSGHQYYQADASKLKSGYSWKISYGDGSGASGKVYADKVVVGGVTATSQAVEAATSVSAQFSRDSNTDGLLGLAFSSINTVSPEPQKTFFDTVKPQLAEPLFAVNLKYHAAGTYDFGYIDKSKYTGPITYVNVDDSQGFWGISATAYGVGGTTTQRAISGILDTGTTLVYTDTAIVKAYYAKVSGAKLDNIQGGYVFPCSATLPNFSITVGGVAQVVPGKHINYSPVDSSGTTCFGGIQTNDGLGMSIFGDIFLKSKYVVHEAAPDSPPRIGLAQSASV</sequence>
<organism>
    <name type="scientific">Leptosphaeria maculans (strain JN3 / isolate v23.1.3 / race Av1-4-5-6-7-8)</name>
    <name type="common">Blackleg fungus</name>
    <name type="synonym">Phoma lingam</name>
    <dbReference type="NCBI Taxonomy" id="985895"/>
    <lineage>
        <taxon>Eukaryota</taxon>
        <taxon>Fungi</taxon>
        <taxon>Dikarya</taxon>
        <taxon>Ascomycota</taxon>
        <taxon>Pezizomycotina</taxon>
        <taxon>Dothideomycetes</taxon>
        <taxon>Pleosporomycetidae</taxon>
        <taxon>Pleosporales</taxon>
        <taxon>Pleosporineae</taxon>
        <taxon>Leptosphaeriaceae</taxon>
        <taxon>Plenodomus</taxon>
        <taxon>Plenodomus lingam/Leptosphaeria maculans species complex</taxon>
    </lineage>
</organism>
<reference key="1">
    <citation type="journal article" date="2011" name="Nat. Commun.">
        <title>Effector diversification within compartments of the Leptosphaeria maculans genome affected by Repeat-Induced Point mutations.</title>
        <authorList>
            <person name="Rouxel T."/>
            <person name="Grandaubert J."/>
            <person name="Hane J.K."/>
            <person name="Hoede C."/>
            <person name="van de Wouw A.P."/>
            <person name="Couloux A."/>
            <person name="Dominguez V."/>
            <person name="Anthouard V."/>
            <person name="Bally P."/>
            <person name="Bourras S."/>
            <person name="Cozijnsen A.J."/>
            <person name="Ciuffetti L.M."/>
            <person name="Degrave A."/>
            <person name="Dilmaghani A."/>
            <person name="Duret L."/>
            <person name="Fudal I."/>
            <person name="Goodwin S.B."/>
            <person name="Gout L."/>
            <person name="Glaser N."/>
            <person name="Linglin J."/>
            <person name="Kema G.H.J."/>
            <person name="Lapalu N."/>
            <person name="Lawrence C.B."/>
            <person name="May K."/>
            <person name="Meyer M."/>
            <person name="Ollivier B."/>
            <person name="Poulain J."/>
            <person name="Schoch C.L."/>
            <person name="Simon A."/>
            <person name="Spatafora J.W."/>
            <person name="Stachowiak A."/>
            <person name="Turgeon B.G."/>
            <person name="Tyler B.M."/>
            <person name="Vincent D."/>
            <person name="Weissenbach J."/>
            <person name="Amselem J."/>
            <person name="Quesneville H."/>
            <person name="Oliver R.P."/>
            <person name="Wincker P."/>
            <person name="Balesdent M.-H."/>
            <person name="Howlett B.J."/>
        </authorList>
    </citation>
    <scope>NUCLEOTIDE SEQUENCE [LARGE SCALE GENOMIC DNA]</scope>
    <source>
        <strain>JN3 / isolate v23.1.3 / race Av1-4-5-6-7-8</strain>
    </source>
</reference>
<keyword id="KW-0064">Aspartyl protease</keyword>
<keyword id="KW-1015">Disulfide bond</keyword>
<keyword id="KW-0325">Glycoprotein</keyword>
<keyword id="KW-0378">Hydrolase</keyword>
<keyword id="KW-0645">Protease</keyword>
<keyword id="KW-1185">Reference proteome</keyword>
<keyword id="KW-0964">Secreted</keyword>
<keyword id="KW-0732">Signal</keyword>
<keyword id="KW-0865">Zymogen</keyword>
<feature type="signal peptide" evidence="2">
    <location>
        <begin position="1"/>
        <end position="19"/>
    </location>
</feature>
<feature type="propeptide" id="PRO_0000407050" description="Activation peptide" evidence="1">
    <location>
        <begin position="20"/>
        <end position="65"/>
    </location>
</feature>
<feature type="chain" id="PRO_0000407051" description="Aspartic protease pepA">
    <location>
        <begin position="66"/>
        <end position="409"/>
    </location>
</feature>
<feature type="domain" description="Peptidase A1" evidence="4">
    <location>
        <begin position="97"/>
        <end position="404"/>
    </location>
</feature>
<feature type="active site" evidence="4">
    <location>
        <position position="113"/>
    </location>
</feature>
<feature type="active site" evidence="4">
    <location>
        <position position="293"/>
    </location>
</feature>
<feature type="glycosylation site" description="N-linked (GlcNAc...) asparagine" evidence="3">
    <location>
        <position position="335"/>
    </location>
</feature>
<feature type="disulfide bond" evidence="4">
    <location>
        <begin position="329"/>
        <end position="364"/>
    </location>
</feature>
<protein>
    <recommendedName>
        <fullName evidence="5">Aspartic protease pepA</fullName>
        <ecNumber>3.4.23.-</ecNumber>
    </recommendedName>
</protein>
<gene>
    <name type="ORF">Lema_P089170.1</name>
</gene>